<proteinExistence type="inferred from homology"/>
<protein>
    <recommendedName>
        <fullName evidence="1">Elongation factor Ts</fullName>
        <shortName evidence="1">EF-Ts</shortName>
    </recommendedName>
</protein>
<name>EFTS_LEPBJ</name>
<evidence type="ECO:0000255" key="1">
    <source>
        <dbReference type="HAMAP-Rule" id="MF_00050"/>
    </source>
</evidence>
<accession>Q04U71</accession>
<reference key="1">
    <citation type="journal article" date="2006" name="Proc. Natl. Acad. Sci. U.S.A.">
        <title>Genome reduction in Leptospira borgpetersenii reflects limited transmission potential.</title>
        <authorList>
            <person name="Bulach D.M."/>
            <person name="Zuerner R.L."/>
            <person name="Wilson P."/>
            <person name="Seemann T."/>
            <person name="McGrath A."/>
            <person name="Cullen P.A."/>
            <person name="Davis J."/>
            <person name="Johnson M."/>
            <person name="Kuczek E."/>
            <person name="Alt D.P."/>
            <person name="Peterson-Burch B."/>
            <person name="Coppel R.L."/>
            <person name="Rood J.I."/>
            <person name="Davies J.K."/>
            <person name="Adler B."/>
        </authorList>
    </citation>
    <scope>NUCLEOTIDE SEQUENCE [LARGE SCALE GENOMIC DNA]</scope>
    <source>
        <strain>JB197</strain>
    </source>
</reference>
<feature type="chain" id="PRO_1000006119" description="Elongation factor Ts">
    <location>
        <begin position="1"/>
        <end position="199"/>
    </location>
</feature>
<feature type="region of interest" description="Involved in Mg(2+) ion dislocation from EF-Tu" evidence="1">
    <location>
        <begin position="82"/>
        <end position="85"/>
    </location>
</feature>
<comment type="function">
    <text evidence="1">Associates with the EF-Tu.GDP complex and induces the exchange of GDP to GTP. It remains bound to the aminoacyl-tRNA.EF-Tu.GTP complex up to the GTP hydrolysis stage on the ribosome.</text>
</comment>
<comment type="subcellular location">
    <subcellularLocation>
        <location evidence="1">Cytoplasm</location>
    </subcellularLocation>
</comment>
<comment type="similarity">
    <text evidence="1">Belongs to the EF-Ts family.</text>
</comment>
<keyword id="KW-0963">Cytoplasm</keyword>
<keyword id="KW-0251">Elongation factor</keyword>
<keyword id="KW-0648">Protein biosynthesis</keyword>
<sequence>MAAVTTDLIRELRERTSAGMMDCKKALEENNADIEKAITWLREKGIAKAAKKAGRETKEGRIVSYIHGNGKIGVLLELNSETDFVSKNEEFEALGKEICMQIAAMNPLYLNEESIPAADLEREKGIMKSQLEAEGKKAEQIEKILPGKIKKYVSEVCLVNQAFFKDDSKTIDDLVKEAIAKFGENITIAHFVRFQVGGL</sequence>
<dbReference type="EMBL" id="CP000350">
    <property type="protein sequence ID" value="ABJ75549.1"/>
    <property type="molecule type" value="Genomic_DNA"/>
</dbReference>
<dbReference type="RefSeq" id="WP_011669749.1">
    <property type="nucleotide sequence ID" value="NC_008510.1"/>
</dbReference>
<dbReference type="SMR" id="Q04U71"/>
<dbReference type="KEGG" id="lbj:LBJ_0905"/>
<dbReference type="HOGENOM" id="CLU_047155_1_1_12"/>
<dbReference type="Proteomes" id="UP000000656">
    <property type="component" value="Chromosome 1"/>
</dbReference>
<dbReference type="GO" id="GO:0005737">
    <property type="term" value="C:cytoplasm"/>
    <property type="evidence" value="ECO:0007669"/>
    <property type="project" value="UniProtKB-SubCell"/>
</dbReference>
<dbReference type="GO" id="GO:0003746">
    <property type="term" value="F:translation elongation factor activity"/>
    <property type="evidence" value="ECO:0007669"/>
    <property type="project" value="UniProtKB-UniRule"/>
</dbReference>
<dbReference type="CDD" id="cd14275">
    <property type="entry name" value="UBA_EF-Ts"/>
    <property type="match status" value="1"/>
</dbReference>
<dbReference type="FunFam" id="1.10.8.10:FF:000001">
    <property type="entry name" value="Elongation factor Ts"/>
    <property type="match status" value="1"/>
</dbReference>
<dbReference type="Gene3D" id="1.10.286.20">
    <property type="match status" value="1"/>
</dbReference>
<dbReference type="Gene3D" id="1.10.8.10">
    <property type="entry name" value="DNA helicase RuvA subunit, C-terminal domain"/>
    <property type="match status" value="1"/>
</dbReference>
<dbReference type="Gene3D" id="3.30.479.20">
    <property type="entry name" value="Elongation factor Ts, dimerisation domain"/>
    <property type="match status" value="1"/>
</dbReference>
<dbReference type="HAMAP" id="MF_00050">
    <property type="entry name" value="EF_Ts"/>
    <property type="match status" value="1"/>
</dbReference>
<dbReference type="InterPro" id="IPR036402">
    <property type="entry name" value="EF-Ts_dimer_sf"/>
</dbReference>
<dbReference type="InterPro" id="IPR001816">
    <property type="entry name" value="Transl_elong_EFTs/EF1B"/>
</dbReference>
<dbReference type="InterPro" id="IPR014039">
    <property type="entry name" value="Transl_elong_EFTs/EF1B_dimer"/>
</dbReference>
<dbReference type="InterPro" id="IPR018101">
    <property type="entry name" value="Transl_elong_Ts_CS"/>
</dbReference>
<dbReference type="InterPro" id="IPR009060">
    <property type="entry name" value="UBA-like_sf"/>
</dbReference>
<dbReference type="NCBIfam" id="TIGR00116">
    <property type="entry name" value="tsf"/>
    <property type="match status" value="1"/>
</dbReference>
<dbReference type="PANTHER" id="PTHR11741">
    <property type="entry name" value="ELONGATION FACTOR TS"/>
    <property type="match status" value="1"/>
</dbReference>
<dbReference type="PANTHER" id="PTHR11741:SF0">
    <property type="entry name" value="ELONGATION FACTOR TS, MITOCHONDRIAL"/>
    <property type="match status" value="1"/>
</dbReference>
<dbReference type="Pfam" id="PF00889">
    <property type="entry name" value="EF_TS"/>
    <property type="match status" value="1"/>
</dbReference>
<dbReference type="SUPFAM" id="SSF54713">
    <property type="entry name" value="Elongation factor Ts (EF-Ts), dimerisation domain"/>
    <property type="match status" value="1"/>
</dbReference>
<dbReference type="SUPFAM" id="SSF46934">
    <property type="entry name" value="UBA-like"/>
    <property type="match status" value="1"/>
</dbReference>
<dbReference type="PROSITE" id="PS01126">
    <property type="entry name" value="EF_TS_1"/>
    <property type="match status" value="1"/>
</dbReference>
<dbReference type="PROSITE" id="PS01127">
    <property type="entry name" value="EF_TS_2"/>
    <property type="match status" value="1"/>
</dbReference>
<organism>
    <name type="scientific">Leptospira borgpetersenii serovar Hardjo-bovis (strain JB197)</name>
    <dbReference type="NCBI Taxonomy" id="355277"/>
    <lineage>
        <taxon>Bacteria</taxon>
        <taxon>Pseudomonadati</taxon>
        <taxon>Spirochaetota</taxon>
        <taxon>Spirochaetia</taxon>
        <taxon>Leptospirales</taxon>
        <taxon>Leptospiraceae</taxon>
        <taxon>Leptospira</taxon>
    </lineage>
</organism>
<gene>
    <name evidence="1" type="primary">tsf</name>
    <name type="ordered locus">LBJ_0905</name>
</gene>